<keyword id="KW-0963">Cytoplasm</keyword>
<keyword id="KW-0413">Isomerase</keyword>
<keyword id="KW-0627">Porphyrin biosynthesis</keyword>
<keyword id="KW-0663">Pyridoxal phosphate</keyword>
<evidence type="ECO:0000255" key="1">
    <source>
        <dbReference type="HAMAP-Rule" id="MF_00375"/>
    </source>
</evidence>
<name>GSA_MOOTA</name>
<gene>
    <name evidence="1" type="primary">hemL</name>
    <name type="ordered locus">Moth_1244</name>
</gene>
<organism>
    <name type="scientific">Moorella thermoacetica (strain ATCC 39073 / JCM 9320)</name>
    <dbReference type="NCBI Taxonomy" id="264732"/>
    <lineage>
        <taxon>Bacteria</taxon>
        <taxon>Bacillati</taxon>
        <taxon>Bacillota</taxon>
        <taxon>Clostridia</taxon>
        <taxon>Moorellales</taxon>
        <taxon>Moorellaceae</taxon>
        <taxon>Moorella</taxon>
    </lineage>
</organism>
<dbReference type="EC" id="5.4.3.8" evidence="1"/>
<dbReference type="EMBL" id="CP000232">
    <property type="protein sequence ID" value="ABC19558.1"/>
    <property type="molecule type" value="Genomic_DNA"/>
</dbReference>
<dbReference type="RefSeq" id="YP_430101.1">
    <property type="nucleotide sequence ID" value="NC_007644.1"/>
</dbReference>
<dbReference type="SMR" id="Q2RJ31"/>
<dbReference type="STRING" id="264732.Moth_1244"/>
<dbReference type="EnsemblBacteria" id="ABC19558">
    <property type="protein sequence ID" value="ABC19558"/>
    <property type="gene ID" value="Moth_1244"/>
</dbReference>
<dbReference type="KEGG" id="mta:Moth_1244"/>
<dbReference type="PATRIC" id="fig|264732.11.peg.1336"/>
<dbReference type="eggNOG" id="COG0001">
    <property type="taxonomic scope" value="Bacteria"/>
</dbReference>
<dbReference type="HOGENOM" id="CLU_016922_1_5_9"/>
<dbReference type="OrthoDB" id="9801052at2"/>
<dbReference type="UniPathway" id="UPA00251">
    <property type="reaction ID" value="UER00317"/>
</dbReference>
<dbReference type="GO" id="GO:0005737">
    <property type="term" value="C:cytoplasm"/>
    <property type="evidence" value="ECO:0007669"/>
    <property type="project" value="UniProtKB-SubCell"/>
</dbReference>
<dbReference type="GO" id="GO:0042286">
    <property type="term" value="F:glutamate-1-semialdehyde 2,1-aminomutase activity"/>
    <property type="evidence" value="ECO:0007669"/>
    <property type="project" value="UniProtKB-UniRule"/>
</dbReference>
<dbReference type="GO" id="GO:0030170">
    <property type="term" value="F:pyridoxal phosphate binding"/>
    <property type="evidence" value="ECO:0007669"/>
    <property type="project" value="InterPro"/>
</dbReference>
<dbReference type="GO" id="GO:0008483">
    <property type="term" value="F:transaminase activity"/>
    <property type="evidence" value="ECO:0007669"/>
    <property type="project" value="InterPro"/>
</dbReference>
<dbReference type="GO" id="GO:0006782">
    <property type="term" value="P:protoporphyrinogen IX biosynthetic process"/>
    <property type="evidence" value="ECO:0007669"/>
    <property type="project" value="UniProtKB-UniRule"/>
</dbReference>
<dbReference type="CDD" id="cd00610">
    <property type="entry name" value="OAT_like"/>
    <property type="match status" value="1"/>
</dbReference>
<dbReference type="FunFam" id="3.40.640.10:FF:000021">
    <property type="entry name" value="Glutamate-1-semialdehyde 2,1-aminomutase"/>
    <property type="match status" value="1"/>
</dbReference>
<dbReference type="Gene3D" id="3.90.1150.10">
    <property type="entry name" value="Aspartate Aminotransferase, domain 1"/>
    <property type="match status" value="1"/>
</dbReference>
<dbReference type="Gene3D" id="3.40.640.10">
    <property type="entry name" value="Type I PLP-dependent aspartate aminotransferase-like (Major domain)"/>
    <property type="match status" value="1"/>
</dbReference>
<dbReference type="HAMAP" id="MF_00375">
    <property type="entry name" value="HemL_aminotrans_3"/>
    <property type="match status" value="1"/>
</dbReference>
<dbReference type="InterPro" id="IPR004639">
    <property type="entry name" value="4pyrrol_synth_GluAld_NH2Trfase"/>
</dbReference>
<dbReference type="InterPro" id="IPR005814">
    <property type="entry name" value="Aminotrans_3"/>
</dbReference>
<dbReference type="InterPro" id="IPR049704">
    <property type="entry name" value="Aminotrans_3_PPA_site"/>
</dbReference>
<dbReference type="InterPro" id="IPR015424">
    <property type="entry name" value="PyrdxlP-dep_Trfase"/>
</dbReference>
<dbReference type="InterPro" id="IPR015421">
    <property type="entry name" value="PyrdxlP-dep_Trfase_major"/>
</dbReference>
<dbReference type="InterPro" id="IPR015422">
    <property type="entry name" value="PyrdxlP-dep_Trfase_small"/>
</dbReference>
<dbReference type="NCBIfam" id="TIGR00713">
    <property type="entry name" value="hemL"/>
    <property type="match status" value="1"/>
</dbReference>
<dbReference type="NCBIfam" id="NF000818">
    <property type="entry name" value="PRK00062.1"/>
    <property type="match status" value="1"/>
</dbReference>
<dbReference type="PANTHER" id="PTHR43713">
    <property type="entry name" value="GLUTAMATE-1-SEMIALDEHYDE 2,1-AMINOMUTASE"/>
    <property type="match status" value="1"/>
</dbReference>
<dbReference type="PANTHER" id="PTHR43713:SF3">
    <property type="entry name" value="GLUTAMATE-1-SEMIALDEHYDE 2,1-AMINOMUTASE 1, CHLOROPLASTIC-RELATED"/>
    <property type="match status" value="1"/>
</dbReference>
<dbReference type="Pfam" id="PF00202">
    <property type="entry name" value="Aminotran_3"/>
    <property type="match status" value="1"/>
</dbReference>
<dbReference type="SUPFAM" id="SSF53383">
    <property type="entry name" value="PLP-dependent transferases"/>
    <property type="match status" value="1"/>
</dbReference>
<dbReference type="PROSITE" id="PS00600">
    <property type="entry name" value="AA_TRANSFER_CLASS_3"/>
    <property type="match status" value="1"/>
</dbReference>
<sequence>MTDSEAWPRSAAAFAEAVKLMPGGVNSPVRAFKSVGLTPPFIQRGEGAYLYDIDGHKYIDYVSSWGPLILGHRHPEVVDALEKTLREMGTSFGAPTELENELAREITTAMPAVEMVRLVNSGTEATMSALRLARGYTGREKVVKFAGCYHGHADYFLIQAGSGALTFGIPNSPGVPATVAANTIVAPYNDLAAVEDIFQKAGEEIAAVIVEPVAGNMGCVPPLTGFLAGLRTITKEYGSLLIFDEVMTGFRVAFGGAQALYGIRPDLTCLGKIIGGGLPVGAYGGRREIMERVAPSGPIYQAGTLSGNPLAVSAGLATLKVLKKPGTYERLESLSARLEKGLKEAAAEAGVPVTFNRVGAMFTTFFNPGPVTDYATATASDTRAFAAFFRAMLRQGIYLAPSQFEAAFMSLAHREDDIDCTIAAAREAFKGIAIGDS</sequence>
<reference key="1">
    <citation type="journal article" date="2008" name="Environ. Microbiol.">
        <title>The complete genome sequence of Moorella thermoacetica (f. Clostridium thermoaceticum).</title>
        <authorList>
            <person name="Pierce E."/>
            <person name="Xie G."/>
            <person name="Barabote R.D."/>
            <person name="Saunders E."/>
            <person name="Han C.S."/>
            <person name="Detter J.C."/>
            <person name="Richardson P."/>
            <person name="Brettin T.S."/>
            <person name="Das A."/>
            <person name="Ljungdahl L.G."/>
            <person name="Ragsdale S.W."/>
        </authorList>
    </citation>
    <scope>NUCLEOTIDE SEQUENCE [LARGE SCALE GENOMIC DNA]</scope>
    <source>
        <strain>ATCC 39073 / JCM 9320</strain>
    </source>
</reference>
<accession>Q2RJ31</accession>
<proteinExistence type="inferred from homology"/>
<feature type="chain" id="PRO_0000243585" description="Glutamate-1-semialdehyde 2,1-aminomutase">
    <location>
        <begin position="1"/>
        <end position="437"/>
    </location>
</feature>
<feature type="modified residue" description="N6-(pyridoxal phosphate)lysine" evidence="1">
    <location>
        <position position="272"/>
    </location>
</feature>
<comment type="catalytic activity">
    <reaction evidence="1">
        <text>(S)-4-amino-5-oxopentanoate = 5-aminolevulinate</text>
        <dbReference type="Rhea" id="RHEA:14265"/>
        <dbReference type="ChEBI" id="CHEBI:57501"/>
        <dbReference type="ChEBI" id="CHEBI:356416"/>
        <dbReference type="EC" id="5.4.3.8"/>
    </reaction>
</comment>
<comment type="cofactor">
    <cofactor evidence="1">
        <name>pyridoxal 5'-phosphate</name>
        <dbReference type="ChEBI" id="CHEBI:597326"/>
    </cofactor>
</comment>
<comment type="pathway">
    <text evidence="1">Porphyrin-containing compound metabolism; protoporphyrin-IX biosynthesis; 5-aminolevulinate from L-glutamyl-tRNA(Glu): step 2/2.</text>
</comment>
<comment type="subunit">
    <text evidence="1">Homodimer.</text>
</comment>
<comment type="subcellular location">
    <subcellularLocation>
        <location evidence="1">Cytoplasm</location>
    </subcellularLocation>
</comment>
<comment type="similarity">
    <text evidence="1">Belongs to the class-III pyridoxal-phosphate-dependent aminotransferase family. HemL subfamily.</text>
</comment>
<protein>
    <recommendedName>
        <fullName evidence="1">Glutamate-1-semialdehyde 2,1-aminomutase</fullName>
        <shortName evidence="1">GSA</shortName>
        <ecNumber evidence="1">5.4.3.8</ecNumber>
    </recommendedName>
    <alternativeName>
        <fullName evidence="1">Glutamate-1-semialdehyde aminotransferase</fullName>
        <shortName evidence="1">GSA-AT</shortName>
    </alternativeName>
</protein>